<sequence length="264" mass="30385">MKKLKLHGFNNLTKSLSFCIYDICYAKTAEERDGYIAYIDELYNANRLTEILSETCSIIGANILNIARQDYEPQGASVTILVSEEPVDPKLIDKTEHPGPLPETVVAHLDKSHICVHTYPESHPEGGLCTFRADIEVSTCGVISPLKALNYLIHQLESDIVTIDYRVRGFTRDINGMKHFIDHEINSIQNFMSDDMKALYDMVDVNVYQENIFHTKMLLKEFDLKHYMFHTKPEDLTDSERQEITAALWKEMREIYYGRNMPAV</sequence>
<reference key="1">
    <citation type="journal article" date="2009" name="PLoS Genet.">
        <title>Organised genome dynamics in the Escherichia coli species results in highly diverse adaptive paths.</title>
        <authorList>
            <person name="Touchon M."/>
            <person name="Hoede C."/>
            <person name="Tenaillon O."/>
            <person name="Barbe V."/>
            <person name="Baeriswyl S."/>
            <person name="Bidet P."/>
            <person name="Bingen E."/>
            <person name="Bonacorsi S."/>
            <person name="Bouchier C."/>
            <person name="Bouvet O."/>
            <person name="Calteau A."/>
            <person name="Chiapello H."/>
            <person name="Clermont O."/>
            <person name="Cruveiller S."/>
            <person name="Danchin A."/>
            <person name="Diard M."/>
            <person name="Dossat C."/>
            <person name="Karoui M.E."/>
            <person name="Frapy E."/>
            <person name="Garry L."/>
            <person name="Ghigo J.M."/>
            <person name="Gilles A.M."/>
            <person name="Johnson J."/>
            <person name="Le Bouguenec C."/>
            <person name="Lescat M."/>
            <person name="Mangenot S."/>
            <person name="Martinez-Jehanne V."/>
            <person name="Matic I."/>
            <person name="Nassif X."/>
            <person name="Oztas S."/>
            <person name="Petit M.A."/>
            <person name="Pichon C."/>
            <person name="Rouy Z."/>
            <person name="Ruf C.S."/>
            <person name="Schneider D."/>
            <person name="Tourret J."/>
            <person name="Vacherie B."/>
            <person name="Vallenet D."/>
            <person name="Medigue C."/>
            <person name="Rocha E.P.C."/>
            <person name="Denamur E."/>
        </authorList>
    </citation>
    <scope>NUCLEOTIDE SEQUENCE [LARGE SCALE GENOMIC DNA]</scope>
    <source>
        <strain>IAI39 / ExPEC</strain>
    </source>
</reference>
<feature type="chain" id="PRO_1000125479" description="S-adenosylmethionine decarboxylase beta chain" evidence="1">
    <location>
        <begin position="1"/>
        <end position="111"/>
    </location>
</feature>
<feature type="chain" id="PRO_1000125480" description="S-adenosylmethionine decarboxylase alpha chain" evidence="1">
    <location>
        <begin position="112"/>
        <end position="264"/>
    </location>
</feature>
<feature type="active site" description="Schiff-base intermediate with substrate; via pyruvic acid" evidence="1">
    <location>
        <position position="112"/>
    </location>
</feature>
<feature type="active site" description="Proton acceptor; for processing activity" evidence="1">
    <location>
        <position position="117"/>
    </location>
</feature>
<feature type="active site" description="Proton donor; for catalytic activity" evidence="1">
    <location>
        <position position="140"/>
    </location>
</feature>
<feature type="site" description="Cleavage (non-hydrolytic); by autolysis" evidence="1">
    <location>
        <begin position="111"/>
        <end position="112"/>
    </location>
</feature>
<feature type="modified residue" description="Pyruvic acid (Ser); by autocatalysis" evidence="1">
    <location>
        <position position="112"/>
    </location>
</feature>
<name>SPED_ECO7I</name>
<proteinExistence type="inferred from homology"/>
<keyword id="KW-0068">Autocatalytic cleavage</keyword>
<keyword id="KW-0210">Decarboxylase</keyword>
<keyword id="KW-0456">Lyase</keyword>
<keyword id="KW-0620">Polyamine biosynthesis</keyword>
<keyword id="KW-0670">Pyruvate</keyword>
<keyword id="KW-0949">S-adenosyl-L-methionine</keyword>
<keyword id="KW-0704">Schiff base</keyword>
<keyword id="KW-0745">Spermidine biosynthesis</keyword>
<keyword id="KW-0865">Zymogen</keyword>
<gene>
    <name evidence="1" type="primary">speD</name>
    <name type="ordered locus">ECIAI39_0120</name>
</gene>
<organism>
    <name type="scientific">Escherichia coli O7:K1 (strain IAI39 / ExPEC)</name>
    <dbReference type="NCBI Taxonomy" id="585057"/>
    <lineage>
        <taxon>Bacteria</taxon>
        <taxon>Pseudomonadati</taxon>
        <taxon>Pseudomonadota</taxon>
        <taxon>Gammaproteobacteria</taxon>
        <taxon>Enterobacterales</taxon>
        <taxon>Enterobacteriaceae</taxon>
        <taxon>Escherichia</taxon>
    </lineage>
</organism>
<accession>B7NI80</accession>
<protein>
    <recommendedName>
        <fullName evidence="1">S-adenosylmethionine decarboxylase proenzyme</fullName>
        <shortName evidence="1">AdoMetDC</shortName>
        <shortName evidence="1">SAMDC</shortName>
        <ecNumber evidence="1">4.1.1.50</ecNumber>
    </recommendedName>
    <component>
        <recommendedName>
            <fullName evidence="1">S-adenosylmethionine decarboxylase beta chain</fullName>
        </recommendedName>
    </component>
    <component>
        <recommendedName>
            <fullName evidence="1">S-adenosylmethionine decarboxylase alpha chain</fullName>
        </recommendedName>
    </component>
</protein>
<comment type="function">
    <text evidence="1">Catalyzes the decarboxylation of S-adenosylmethionine to S-adenosylmethioninamine (dcAdoMet), the propylamine donor required for the synthesis of the polyamines spermine and spermidine from the diamine putrescine.</text>
</comment>
<comment type="catalytic activity">
    <reaction evidence="1">
        <text>S-adenosyl-L-methionine + H(+) = S-adenosyl 3-(methylsulfanyl)propylamine + CO2</text>
        <dbReference type="Rhea" id="RHEA:15981"/>
        <dbReference type="ChEBI" id="CHEBI:15378"/>
        <dbReference type="ChEBI" id="CHEBI:16526"/>
        <dbReference type="ChEBI" id="CHEBI:57443"/>
        <dbReference type="ChEBI" id="CHEBI:59789"/>
        <dbReference type="EC" id="4.1.1.50"/>
    </reaction>
</comment>
<comment type="cofactor">
    <cofactor evidence="1">
        <name>pyruvate</name>
        <dbReference type="ChEBI" id="CHEBI:15361"/>
    </cofactor>
    <text evidence="1">Binds 1 pyruvoyl group covalently per subunit.</text>
</comment>
<comment type="pathway">
    <text evidence="1">Amine and polyamine biosynthesis; S-adenosylmethioninamine biosynthesis; S-adenosylmethioninamine from S-adenosyl-L-methionine: step 1/1.</text>
</comment>
<comment type="subunit">
    <text evidence="1">Heterooctamer of four alpha and four beta chains arranged as a tetramer of alpha/beta heterodimers.</text>
</comment>
<comment type="PTM">
    <text evidence="1">Is synthesized initially as an inactive proenzyme. Formation of the active enzyme involves a self-maturation process in which the active site pyruvoyl group is generated from an internal serine residue via an autocatalytic post-translational modification. Two non-identical subunits are generated from the proenzyme in this reaction, and the pyruvate is formed at the N-terminus of the alpha chain, which is derived from the carboxyl end of the proenzyme. The post-translation cleavage follows an unusual pathway, termed non-hydrolytic serinolysis, in which the side chain hydroxyl group of the serine supplies its oxygen atom to form the C-terminus of the beta chain, while the remainder of the serine residue undergoes an oxidative deamination to produce ammonia and the pyruvoyl group blocking the N-terminus of the alpha chain.</text>
</comment>
<comment type="similarity">
    <text evidence="1">Belongs to the prokaryotic AdoMetDC family. Type 2 subfamily.</text>
</comment>
<evidence type="ECO:0000255" key="1">
    <source>
        <dbReference type="HAMAP-Rule" id="MF_00465"/>
    </source>
</evidence>
<dbReference type="EC" id="4.1.1.50" evidence="1"/>
<dbReference type="EMBL" id="CU928164">
    <property type="protein sequence ID" value="CAR16261.1"/>
    <property type="molecule type" value="Genomic_DNA"/>
</dbReference>
<dbReference type="RefSeq" id="WP_000734287.1">
    <property type="nucleotide sequence ID" value="NC_011750.1"/>
</dbReference>
<dbReference type="RefSeq" id="YP_002406169.1">
    <property type="nucleotide sequence ID" value="NC_011750.1"/>
</dbReference>
<dbReference type="STRING" id="585057.ECIAI39_0120"/>
<dbReference type="GeneID" id="93777316"/>
<dbReference type="KEGG" id="ect:ECIAI39_0120"/>
<dbReference type="PATRIC" id="fig|585057.6.peg.130"/>
<dbReference type="HOGENOM" id="CLU_092007_0_0_6"/>
<dbReference type="UniPathway" id="UPA00331">
    <property type="reaction ID" value="UER00451"/>
</dbReference>
<dbReference type="Proteomes" id="UP000000749">
    <property type="component" value="Chromosome"/>
</dbReference>
<dbReference type="GO" id="GO:0005829">
    <property type="term" value="C:cytosol"/>
    <property type="evidence" value="ECO:0007669"/>
    <property type="project" value="TreeGrafter"/>
</dbReference>
<dbReference type="GO" id="GO:0004014">
    <property type="term" value="F:adenosylmethionine decarboxylase activity"/>
    <property type="evidence" value="ECO:0007669"/>
    <property type="project" value="UniProtKB-UniRule"/>
</dbReference>
<dbReference type="GO" id="GO:0008295">
    <property type="term" value="P:spermidine biosynthetic process"/>
    <property type="evidence" value="ECO:0007669"/>
    <property type="project" value="UniProtKB-UniRule"/>
</dbReference>
<dbReference type="FunFam" id="3.60.90.10:FF:000001">
    <property type="entry name" value="S-adenosylmethionine decarboxylase proenzyme"/>
    <property type="match status" value="1"/>
</dbReference>
<dbReference type="Gene3D" id="3.60.90.10">
    <property type="entry name" value="S-adenosylmethionine decarboxylase"/>
    <property type="match status" value="1"/>
</dbReference>
<dbReference type="HAMAP" id="MF_00465">
    <property type="entry name" value="AdoMetDC_2"/>
    <property type="match status" value="1"/>
</dbReference>
<dbReference type="InterPro" id="IPR003826">
    <property type="entry name" value="AdoMetDC_fam_prok"/>
</dbReference>
<dbReference type="InterPro" id="IPR009165">
    <property type="entry name" value="S-AdoMet_deCO2ase_bac"/>
</dbReference>
<dbReference type="InterPro" id="IPR016067">
    <property type="entry name" value="S-AdoMet_deCO2ase_core"/>
</dbReference>
<dbReference type="NCBIfam" id="TIGR03331">
    <property type="entry name" value="SAM_DCase_Eco"/>
    <property type="match status" value="1"/>
</dbReference>
<dbReference type="PANTHER" id="PTHR33866">
    <property type="entry name" value="S-ADENOSYLMETHIONINE DECARBOXYLASE PROENZYME"/>
    <property type="match status" value="1"/>
</dbReference>
<dbReference type="PANTHER" id="PTHR33866:SF1">
    <property type="entry name" value="S-ADENOSYLMETHIONINE DECARBOXYLASE PROENZYME"/>
    <property type="match status" value="1"/>
</dbReference>
<dbReference type="Pfam" id="PF02675">
    <property type="entry name" value="AdoMet_dc"/>
    <property type="match status" value="1"/>
</dbReference>
<dbReference type="PIRSF" id="PIRSF001356">
    <property type="entry name" value="SAM_decarboxylas"/>
    <property type="match status" value="1"/>
</dbReference>
<dbReference type="SUPFAM" id="SSF56276">
    <property type="entry name" value="S-adenosylmethionine decarboxylase"/>
    <property type="match status" value="1"/>
</dbReference>